<feature type="chain" id="PRO_0000339226" description="Suppressor of tumorigenicity 7 protein-like">
    <location>
        <begin position="1"/>
        <end position="555"/>
    </location>
</feature>
<feature type="transmembrane region" description="Helical" evidence="1">
    <location>
        <begin position="36"/>
        <end position="56"/>
    </location>
</feature>
<feature type="transmembrane region" description="Helical" evidence="1">
    <location>
        <begin position="80"/>
        <end position="100"/>
    </location>
</feature>
<feature type="region of interest" description="Disordered" evidence="2">
    <location>
        <begin position="126"/>
        <end position="148"/>
    </location>
</feature>
<name>ST7L_BOVIN</name>
<comment type="subcellular location">
    <subcellularLocation>
        <location evidence="3">Membrane</location>
        <topology evidence="3">Multi-pass membrane protein</topology>
    </subcellularLocation>
</comment>
<comment type="similarity">
    <text evidence="3">Belongs to the ST7 family.</text>
</comment>
<dbReference type="EMBL" id="BC133522">
    <property type="protein sequence ID" value="AAI33523.1"/>
    <property type="molecule type" value="mRNA"/>
</dbReference>
<dbReference type="RefSeq" id="NP_001076950.1">
    <property type="nucleotide sequence ID" value="NM_001083481.1"/>
</dbReference>
<dbReference type="SMR" id="A3KN28"/>
<dbReference type="FunCoup" id="A3KN28">
    <property type="interactions" value="1625"/>
</dbReference>
<dbReference type="STRING" id="9913.ENSBTAP00000074021"/>
<dbReference type="PaxDb" id="9913-ENSBTAP00000018992"/>
<dbReference type="GeneID" id="534657"/>
<dbReference type="KEGG" id="bta:534657"/>
<dbReference type="CTD" id="54879"/>
<dbReference type="VEuPathDB" id="HostDB:ENSBTAG00000014294"/>
<dbReference type="eggNOG" id="KOG3807">
    <property type="taxonomic scope" value="Eukaryota"/>
</dbReference>
<dbReference type="HOGENOM" id="CLU_035578_2_0_1"/>
<dbReference type="InParanoid" id="A3KN28"/>
<dbReference type="OrthoDB" id="5914722at2759"/>
<dbReference type="TreeFam" id="TF314162"/>
<dbReference type="Proteomes" id="UP000009136">
    <property type="component" value="Chromosome 3"/>
</dbReference>
<dbReference type="Bgee" id="ENSBTAG00000014294">
    <property type="expression patterns" value="Expressed in spermatocyte and 108 other cell types or tissues"/>
</dbReference>
<dbReference type="GO" id="GO:0016020">
    <property type="term" value="C:membrane"/>
    <property type="evidence" value="ECO:0007669"/>
    <property type="project" value="UniProtKB-SubCell"/>
</dbReference>
<dbReference type="CDD" id="cd11557">
    <property type="entry name" value="ST7"/>
    <property type="match status" value="1"/>
</dbReference>
<dbReference type="InterPro" id="IPR007311">
    <property type="entry name" value="ST7"/>
</dbReference>
<dbReference type="PANTHER" id="PTHR12745">
    <property type="entry name" value="SUPPRESSION OF TUMORIGENICITY 7"/>
    <property type="match status" value="1"/>
</dbReference>
<dbReference type="PANTHER" id="PTHR12745:SF4">
    <property type="entry name" value="SUPPRESSOR OF TUMORIGENICITY 7 PROTEIN-LIKE"/>
    <property type="match status" value="1"/>
</dbReference>
<dbReference type="Pfam" id="PF04184">
    <property type="entry name" value="ST7"/>
    <property type="match status" value="1"/>
</dbReference>
<gene>
    <name type="primary">ST7L</name>
</gene>
<sequence length="555" mass="62636">MADGDGLGEAAIAAASPASAPGLSPSLGWRERLRAGLAGTGASLWFVAGLGLLYALRVPLRLCENLAAVTVFLNSLTPKFYVALTGTSSLISGLIFIFEWWYFHKHGTSFIEQVSVSHLRPLMGGTESSISEPGSPSNNRESETSRQNLSECKVWRNPLNLFRGAEYRRYTWVTGKEPLTYYDMNLSAQDHQTFFTCDTDFLRPSDTVMQKAWRERNPPARIKAAYQALELNNDCATAYVLLAEEEATTIVDAERLFKQALKAGETIYRRSQQCQHQSPQHEAQLRRDTNVLVYIKRRLAMCARKLGRIREAVKIMRDLMKEFPPLTMLNIHENLLESLLELQAYADVQAVLAKYDDISLPKSAAICYTAALLKTRTVSDKFSPETASRRGLSTAEINAVEAIHRAVEFNPHVPKYLLEMKSLILPPEHILKRGDSEAIAYAFFHLQHWKRIEGALHLLQCTWEGTFRMIPYPLEKGHLFYPYPSCTETADRELLPSFHHVSVYPKKEIPFFIHFTAGLCSSTAMIAFLTHQFPEIMGVFAKAVSMISRTCIEYL</sequence>
<proteinExistence type="evidence at transcript level"/>
<keyword id="KW-0472">Membrane</keyword>
<keyword id="KW-1185">Reference proteome</keyword>
<keyword id="KW-0812">Transmembrane</keyword>
<keyword id="KW-1133">Transmembrane helix</keyword>
<evidence type="ECO:0000255" key="1"/>
<evidence type="ECO:0000256" key="2">
    <source>
        <dbReference type="SAM" id="MobiDB-lite"/>
    </source>
</evidence>
<evidence type="ECO:0000305" key="3"/>
<accession>A3KN28</accession>
<protein>
    <recommendedName>
        <fullName>Suppressor of tumorigenicity 7 protein-like</fullName>
    </recommendedName>
</protein>
<reference key="1">
    <citation type="submission" date="2007-02" db="EMBL/GenBank/DDBJ databases">
        <authorList>
            <consortium name="NIH - Mammalian Gene Collection (MGC) project"/>
        </authorList>
    </citation>
    <scope>NUCLEOTIDE SEQUENCE [LARGE SCALE MRNA]</scope>
    <source>
        <strain>Hereford</strain>
        <tissue>Basal ganglia</tissue>
    </source>
</reference>
<organism>
    <name type="scientific">Bos taurus</name>
    <name type="common">Bovine</name>
    <dbReference type="NCBI Taxonomy" id="9913"/>
    <lineage>
        <taxon>Eukaryota</taxon>
        <taxon>Metazoa</taxon>
        <taxon>Chordata</taxon>
        <taxon>Craniata</taxon>
        <taxon>Vertebrata</taxon>
        <taxon>Euteleostomi</taxon>
        <taxon>Mammalia</taxon>
        <taxon>Eutheria</taxon>
        <taxon>Laurasiatheria</taxon>
        <taxon>Artiodactyla</taxon>
        <taxon>Ruminantia</taxon>
        <taxon>Pecora</taxon>
        <taxon>Bovidae</taxon>
        <taxon>Bovinae</taxon>
        <taxon>Bos</taxon>
    </lineage>
</organism>